<comment type="function">
    <text evidence="1">An accessory protein needed during the final step in the assembly of 30S ribosomal subunit, possibly for assembly of the head region. Essential for efficient processing of 16S rRNA. May be needed both before and after RbfA during the maturation of 16S rRNA. It has affinity for free ribosomal 30S subunits but not for 70S ribosomes.</text>
</comment>
<comment type="subunit">
    <text evidence="1">Binds ribosomal protein uS19.</text>
</comment>
<comment type="subcellular location">
    <subcellularLocation>
        <location evidence="1">Cytoplasm</location>
    </subcellularLocation>
</comment>
<comment type="domain">
    <text evidence="1">The PRC barrel domain binds ribosomal protein uS19.</text>
</comment>
<comment type="similarity">
    <text evidence="1">Belongs to the RimM family.</text>
</comment>
<feature type="chain" id="PRO_1000089529" description="Ribosome maturation factor RimM">
    <location>
        <begin position="1"/>
        <end position="167"/>
    </location>
</feature>
<feature type="domain" description="PRC barrel" evidence="1">
    <location>
        <begin position="94"/>
        <end position="167"/>
    </location>
</feature>
<dbReference type="EMBL" id="CP000924">
    <property type="protein sequence ID" value="ABY94928.1"/>
    <property type="molecule type" value="Genomic_DNA"/>
</dbReference>
<dbReference type="RefSeq" id="WP_003866681.1">
    <property type="nucleotide sequence ID" value="NC_010321.1"/>
</dbReference>
<dbReference type="SMR" id="B0K9W5"/>
<dbReference type="STRING" id="340099.Teth39_1274"/>
<dbReference type="KEGG" id="tpd:Teth39_1274"/>
<dbReference type="eggNOG" id="COG0806">
    <property type="taxonomic scope" value="Bacteria"/>
</dbReference>
<dbReference type="HOGENOM" id="CLU_077636_3_2_9"/>
<dbReference type="Proteomes" id="UP000002156">
    <property type="component" value="Chromosome"/>
</dbReference>
<dbReference type="GO" id="GO:0005737">
    <property type="term" value="C:cytoplasm"/>
    <property type="evidence" value="ECO:0007669"/>
    <property type="project" value="UniProtKB-SubCell"/>
</dbReference>
<dbReference type="GO" id="GO:0005840">
    <property type="term" value="C:ribosome"/>
    <property type="evidence" value="ECO:0007669"/>
    <property type="project" value="InterPro"/>
</dbReference>
<dbReference type="GO" id="GO:0043022">
    <property type="term" value="F:ribosome binding"/>
    <property type="evidence" value="ECO:0007669"/>
    <property type="project" value="InterPro"/>
</dbReference>
<dbReference type="GO" id="GO:0042274">
    <property type="term" value="P:ribosomal small subunit biogenesis"/>
    <property type="evidence" value="ECO:0007669"/>
    <property type="project" value="UniProtKB-UniRule"/>
</dbReference>
<dbReference type="GO" id="GO:0006364">
    <property type="term" value="P:rRNA processing"/>
    <property type="evidence" value="ECO:0007669"/>
    <property type="project" value="UniProtKB-UniRule"/>
</dbReference>
<dbReference type="Gene3D" id="2.30.30.240">
    <property type="entry name" value="PRC-barrel domain"/>
    <property type="match status" value="1"/>
</dbReference>
<dbReference type="Gene3D" id="2.40.30.60">
    <property type="entry name" value="RimM"/>
    <property type="match status" value="1"/>
</dbReference>
<dbReference type="HAMAP" id="MF_00014">
    <property type="entry name" value="Ribosome_mat_RimM"/>
    <property type="match status" value="1"/>
</dbReference>
<dbReference type="InterPro" id="IPR011033">
    <property type="entry name" value="PRC_barrel-like_sf"/>
</dbReference>
<dbReference type="InterPro" id="IPR056792">
    <property type="entry name" value="PRC_RimM"/>
</dbReference>
<dbReference type="InterPro" id="IPR011961">
    <property type="entry name" value="RimM"/>
</dbReference>
<dbReference type="InterPro" id="IPR002676">
    <property type="entry name" value="RimM_N"/>
</dbReference>
<dbReference type="InterPro" id="IPR036976">
    <property type="entry name" value="RimM_N_sf"/>
</dbReference>
<dbReference type="InterPro" id="IPR009000">
    <property type="entry name" value="Transl_B-barrel_sf"/>
</dbReference>
<dbReference type="NCBIfam" id="TIGR02273">
    <property type="entry name" value="16S_RimM"/>
    <property type="match status" value="1"/>
</dbReference>
<dbReference type="PANTHER" id="PTHR33692">
    <property type="entry name" value="RIBOSOME MATURATION FACTOR RIMM"/>
    <property type="match status" value="1"/>
</dbReference>
<dbReference type="PANTHER" id="PTHR33692:SF1">
    <property type="entry name" value="RIBOSOME MATURATION FACTOR RIMM"/>
    <property type="match status" value="1"/>
</dbReference>
<dbReference type="Pfam" id="PF24986">
    <property type="entry name" value="PRC_RimM"/>
    <property type="match status" value="1"/>
</dbReference>
<dbReference type="Pfam" id="PF01782">
    <property type="entry name" value="RimM"/>
    <property type="match status" value="1"/>
</dbReference>
<dbReference type="SUPFAM" id="SSF50346">
    <property type="entry name" value="PRC-barrel domain"/>
    <property type="match status" value="1"/>
</dbReference>
<dbReference type="SUPFAM" id="SSF50447">
    <property type="entry name" value="Translation proteins"/>
    <property type="match status" value="1"/>
</dbReference>
<sequence>MADYYNVGKVTSAHGIKGEVKVYPLTNVPERFYDLEYVWIFDDQQRPHKYDIEYVKIISKGVCVKLKGIDTRGDAEKLKGAFLKVDSQNALELEENEYFIKDLVGMKVYTEEGSFLGTLVEVLKTGANDVYVIKTEEREILIPAIKEVVKKVDVDNKVMVVHLLEGL</sequence>
<gene>
    <name evidence="1" type="primary">rimM</name>
    <name type="ordered locus">Teth39_1274</name>
</gene>
<name>RIMM_THEP3</name>
<proteinExistence type="inferred from homology"/>
<reference key="1">
    <citation type="submission" date="2008-01" db="EMBL/GenBank/DDBJ databases">
        <title>Complete sequence of Thermoanaerobacter pseudethanolicus 39E.</title>
        <authorList>
            <person name="Copeland A."/>
            <person name="Lucas S."/>
            <person name="Lapidus A."/>
            <person name="Barry K."/>
            <person name="Glavina del Rio T."/>
            <person name="Dalin E."/>
            <person name="Tice H."/>
            <person name="Pitluck S."/>
            <person name="Bruce D."/>
            <person name="Goodwin L."/>
            <person name="Saunders E."/>
            <person name="Brettin T."/>
            <person name="Detter J.C."/>
            <person name="Han C."/>
            <person name="Schmutz J."/>
            <person name="Larimer F."/>
            <person name="Land M."/>
            <person name="Hauser L."/>
            <person name="Kyrpides N."/>
            <person name="Lykidis A."/>
            <person name="Hemme C."/>
            <person name="Fields M.W."/>
            <person name="He Z."/>
            <person name="Zhou J."/>
            <person name="Richardson P."/>
        </authorList>
    </citation>
    <scope>NUCLEOTIDE SEQUENCE [LARGE SCALE GENOMIC DNA]</scope>
    <source>
        <strain>ATCC 33223 / DSM 2355 / 39E</strain>
    </source>
</reference>
<evidence type="ECO:0000255" key="1">
    <source>
        <dbReference type="HAMAP-Rule" id="MF_00014"/>
    </source>
</evidence>
<keyword id="KW-0143">Chaperone</keyword>
<keyword id="KW-0963">Cytoplasm</keyword>
<keyword id="KW-1185">Reference proteome</keyword>
<keyword id="KW-0690">Ribosome biogenesis</keyword>
<keyword id="KW-0698">rRNA processing</keyword>
<accession>B0K9W5</accession>
<protein>
    <recommendedName>
        <fullName evidence="1">Ribosome maturation factor RimM</fullName>
    </recommendedName>
</protein>
<organism>
    <name type="scientific">Thermoanaerobacter pseudethanolicus (strain ATCC 33223 / 39E)</name>
    <name type="common">Clostridium thermohydrosulfuricum</name>
    <dbReference type="NCBI Taxonomy" id="340099"/>
    <lineage>
        <taxon>Bacteria</taxon>
        <taxon>Bacillati</taxon>
        <taxon>Bacillota</taxon>
        <taxon>Clostridia</taxon>
        <taxon>Thermoanaerobacterales</taxon>
        <taxon>Thermoanaerobacteraceae</taxon>
        <taxon>Thermoanaerobacter</taxon>
    </lineage>
</organism>